<comment type="function">
    <text evidence="1">Catalyzes the condensation reaction of fatty acid synthesis by the addition to an acyl acceptor of two carbons from malonyl-ACP. Catalyzes the first condensation reaction which initiates fatty acid synthesis and may therefore play a role in governing the total rate of fatty acid production. Possesses both acetoacetyl-ACP synthase and acetyl transacylase activities. Its substrate specificity determines the biosynthesis of branched-chain and/or straight-chain of fatty acids.</text>
</comment>
<comment type="catalytic activity">
    <reaction evidence="1">
        <text>malonyl-[ACP] + acetyl-CoA + H(+) = 3-oxobutanoyl-[ACP] + CO2 + CoA</text>
        <dbReference type="Rhea" id="RHEA:12080"/>
        <dbReference type="Rhea" id="RHEA-COMP:9623"/>
        <dbReference type="Rhea" id="RHEA-COMP:9625"/>
        <dbReference type="ChEBI" id="CHEBI:15378"/>
        <dbReference type="ChEBI" id="CHEBI:16526"/>
        <dbReference type="ChEBI" id="CHEBI:57287"/>
        <dbReference type="ChEBI" id="CHEBI:57288"/>
        <dbReference type="ChEBI" id="CHEBI:78449"/>
        <dbReference type="ChEBI" id="CHEBI:78450"/>
        <dbReference type="EC" id="2.3.1.180"/>
    </reaction>
</comment>
<comment type="pathway">
    <text evidence="1">Lipid metabolism; fatty acid biosynthesis.</text>
</comment>
<comment type="subunit">
    <text evidence="1">Homodimer.</text>
</comment>
<comment type="subcellular location">
    <subcellularLocation>
        <location evidence="1">Cytoplasm</location>
    </subcellularLocation>
</comment>
<comment type="domain">
    <text evidence="1">The last Arg residue of the ACP-binding site is essential for the weak association between ACP/AcpP and FabH.</text>
</comment>
<comment type="similarity">
    <text evidence="1">Belongs to the thiolase-like superfamily. FabH family.</text>
</comment>
<reference key="1">
    <citation type="journal article" date="2009" name="PLoS ONE">
        <title>Non mycobacterial virulence genes in the genome of the emerging pathogen Mycobacterium abscessus.</title>
        <authorList>
            <person name="Ripoll F."/>
            <person name="Pasek S."/>
            <person name="Schenowitz C."/>
            <person name="Dossat C."/>
            <person name="Barbe V."/>
            <person name="Rottman M."/>
            <person name="Macheras E."/>
            <person name="Heym B."/>
            <person name="Herrmann J.L."/>
            <person name="Daffe M."/>
            <person name="Brosch R."/>
            <person name="Risler J.L."/>
            <person name="Gaillard J.L."/>
        </authorList>
    </citation>
    <scope>NUCLEOTIDE SEQUENCE [LARGE SCALE GENOMIC DNA]</scope>
    <source>
        <strain>ATCC 19977 / DSM 44196 / CCUG 20993 / CIP 104536 / JCM 13569 / NCTC 13031 / TMC 1543 / L948</strain>
    </source>
</reference>
<evidence type="ECO:0000255" key="1">
    <source>
        <dbReference type="HAMAP-Rule" id="MF_01815"/>
    </source>
</evidence>
<sequence>MTDIAEITGINKIGLLSLGAYRPERVVTNDEICERIESSDEWIYTRTGIKTRRFAADEETAQTLAIEAGRKAIANALLTGAEIDAVIVATSTHYLQTPASAPAVATALGAQGVPAFDLSAGCAGFGYAVGVAGDMIRGGSASKVLVIGSEKLSPALDMTDRGNCFIFGDGAGAVVVGETAEQGIGPTVWGSDGSQSNAIRQDIDWMDFAAAPDPEGPRPYLRIEGTSVFRWAAFEMGKVGQRAMEAAKVGPEQIDVFVPHQANTRINELLAKNLHLRADAVIANDIEHTGNTSAASVPLAMETLLSTGAAKPGDLALLIGYGAGLSYAAQVVRMPPVPFE</sequence>
<proteinExistence type="inferred from homology"/>
<feature type="chain" id="PRO_1000187878" description="Beta-ketoacyl-[acyl-carrier-protein] synthase III">
    <location>
        <begin position="1"/>
        <end position="340"/>
    </location>
</feature>
<feature type="region of interest" description="ACP-binding" evidence="1">
    <location>
        <begin position="261"/>
        <end position="265"/>
    </location>
</feature>
<feature type="active site" evidence="1">
    <location>
        <position position="122"/>
    </location>
</feature>
<feature type="active site" evidence="1">
    <location>
        <position position="260"/>
    </location>
</feature>
<feature type="active site" evidence="1">
    <location>
        <position position="291"/>
    </location>
</feature>
<dbReference type="EC" id="2.3.1.180" evidence="1"/>
<dbReference type="EMBL" id="CU458896">
    <property type="protein sequence ID" value="CAM61229.1"/>
    <property type="molecule type" value="Genomic_DNA"/>
</dbReference>
<dbReference type="RefSeq" id="WP_005109965.1">
    <property type="nucleotide sequence ID" value="NZ_MLCG01000004.1"/>
</dbReference>
<dbReference type="SMR" id="B1MKD7"/>
<dbReference type="GeneID" id="93378089"/>
<dbReference type="KEGG" id="mab:MAB_1141c"/>
<dbReference type="UniPathway" id="UPA00094"/>
<dbReference type="Proteomes" id="UP000007137">
    <property type="component" value="Chromosome"/>
</dbReference>
<dbReference type="GO" id="GO:0005737">
    <property type="term" value="C:cytoplasm"/>
    <property type="evidence" value="ECO:0007669"/>
    <property type="project" value="UniProtKB-SubCell"/>
</dbReference>
<dbReference type="GO" id="GO:0004315">
    <property type="term" value="F:3-oxoacyl-[acyl-carrier-protein] synthase activity"/>
    <property type="evidence" value="ECO:0007669"/>
    <property type="project" value="InterPro"/>
</dbReference>
<dbReference type="GO" id="GO:0033818">
    <property type="term" value="F:beta-ketoacyl-acyl-carrier-protein synthase III activity"/>
    <property type="evidence" value="ECO:0007669"/>
    <property type="project" value="UniProtKB-UniRule"/>
</dbReference>
<dbReference type="GO" id="GO:0006633">
    <property type="term" value="P:fatty acid biosynthetic process"/>
    <property type="evidence" value="ECO:0007669"/>
    <property type="project" value="UniProtKB-UniRule"/>
</dbReference>
<dbReference type="GO" id="GO:0044550">
    <property type="term" value="P:secondary metabolite biosynthetic process"/>
    <property type="evidence" value="ECO:0007669"/>
    <property type="project" value="TreeGrafter"/>
</dbReference>
<dbReference type="CDD" id="cd00830">
    <property type="entry name" value="KAS_III"/>
    <property type="match status" value="1"/>
</dbReference>
<dbReference type="FunFam" id="3.40.47.10:FF:000076">
    <property type="entry name" value="3-oxoacyl-[acyl-carrier-protein] synthase 3"/>
    <property type="match status" value="1"/>
</dbReference>
<dbReference type="Gene3D" id="3.40.47.10">
    <property type="match status" value="2"/>
</dbReference>
<dbReference type="HAMAP" id="MF_01815">
    <property type="entry name" value="FabH"/>
    <property type="match status" value="1"/>
</dbReference>
<dbReference type="InterPro" id="IPR013747">
    <property type="entry name" value="ACP_syn_III_C"/>
</dbReference>
<dbReference type="InterPro" id="IPR013751">
    <property type="entry name" value="ACP_syn_III_N"/>
</dbReference>
<dbReference type="InterPro" id="IPR004655">
    <property type="entry name" value="FabH"/>
</dbReference>
<dbReference type="InterPro" id="IPR016039">
    <property type="entry name" value="Thiolase-like"/>
</dbReference>
<dbReference type="NCBIfam" id="TIGR00747">
    <property type="entry name" value="fabH"/>
    <property type="match status" value="1"/>
</dbReference>
<dbReference type="NCBIfam" id="NF006829">
    <property type="entry name" value="PRK09352.1"/>
    <property type="match status" value="1"/>
</dbReference>
<dbReference type="PANTHER" id="PTHR34069">
    <property type="entry name" value="3-OXOACYL-[ACYL-CARRIER-PROTEIN] SYNTHASE 3"/>
    <property type="match status" value="1"/>
</dbReference>
<dbReference type="PANTHER" id="PTHR34069:SF2">
    <property type="entry name" value="BETA-KETOACYL-[ACYL-CARRIER-PROTEIN] SYNTHASE III"/>
    <property type="match status" value="1"/>
</dbReference>
<dbReference type="Pfam" id="PF08545">
    <property type="entry name" value="ACP_syn_III"/>
    <property type="match status" value="1"/>
</dbReference>
<dbReference type="Pfam" id="PF08541">
    <property type="entry name" value="ACP_syn_III_C"/>
    <property type="match status" value="1"/>
</dbReference>
<dbReference type="SUPFAM" id="SSF53901">
    <property type="entry name" value="Thiolase-like"/>
    <property type="match status" value="1"/>
</dbReference>
<keyword id="KW-0012">Acyltransferase</keyword>
<keyword id="KW-0963">Cytoplasm</keyword>
<keyword id="KW-0275">Fatty acid biosynthesis</keyword>
<keyword id="KW-0276">Fatty acid metabolism</keyword>
<keyword id="KW-0444">Lipid biosynthesis</keyword>
<keyword id="KW-0443">Lipid metabolism</keyword>
<keyword id="KW-0511">Multifunctional enzyme</keyword>
<keyword id="KW-1185">Reference proteome</keyword>
<keyword id="KW-0808">Transferase</keyword>
<organism>
    <name type="scientific">Mycobacteroides abscessus (strain ATCC 19977 / DSM 44196 / CCUG 20993 / CIP 104536 / JCM 13569 / NCTC 13031 / TMC 1543 / L948)</name>
    <name type="common">Mycobacterium abscessus</name>
    <dbReference type="NCBI Taxonomy" id="561007"/>
    <lineage>
        <taxon>Bacteria</taxon>
        <taxon>Bacillati</taxon>
        <taxon>Actinomycetota</taxon>
        <taxon>Actinomycetes</taxon>
        <taxon>Mycobacteriales</taxon>
        <taxon>Mycobacteriaceae</taxon>
        <taxon>Mycobacteroides</taxon>
        <taxon>Mycobacteroides abscessus</taxon>
    </lineage>
</organism>
<accession>B1MKD7</accession>
<gene>
    <name evidence="1" type="primary">fabH</name>
    <name type="ordered locus">MAB_1141c</name>
</gene>
<name>FABH_MYCA9</name>
<protein>
    <recommendedName>
        <fullName evidence="1">Beta-ketoacyl-[acyl-carrier-protein] synthase III</fullName>
        <shortName evidence="1">Beta-ketoacyl-ACP synthase III</shortName>
        <shortName evidence="1">KAS III</shortName>
        <ecNumber evidence="1">2.3.1.180</ecNumber>
    </recommendedName>
    <alternativeName>
        <fullName evidence="1">3-oxoacyl-[acyl-carrier-protein] synthase 3</fullName>
    </alternativeName>
    <alternativeName>
        <fullName evidence="1">3-oxoacyl-[acyl-carrier-protein] synthase III</fullName>
    </alternativeName>
</protein>